<gene>
    <name evidence="1" type="primary">psbZ</name>
</gene>
<reference key="1">
    <citation type="journal article" date="2006" name="BMC Biol.">
        <title>The complete chloroplast DNA sequence of the green alga Oltmannsiellopsis viridis reveals a distinctive quadripartite architecture in the chloroplast genome of early diverging ulvophytes.</title>
        <authorList>
            <person name="Pombert J.-F."/>
            <person name="Lemieux C."/>
            <person name="Turmel M."/>
        </authorList>
    </citation>
    <scope>NUCLEOTIDE SEQUENCE [LARGE SCALE GENOMIC DNA]</scope>
</reference>
<organism>
    <name type="scientific">Oltmannsiellopsis viridis</name>
    <name type="common">Marine flagellate</name>
    <name type="synonym">Oltmannsiella viridis</name>
    <dbReference type="NCBI Taxonomy" id="51324"/>
    <lineage>
        <taxon>Eukaryota</taxon>
        <taxon>Viridiplantae</taxon>
        <taxon>Chlorophyta</taxon>
        <taxon>Ulvophyceae</taxon>
        <taxon>Oltmannsiellopsidales</taxon>
        <taxon>Oltmannsiellopsidaceae</taxon>
        <taxon>Oltmannsiellopsis</taxon>
    </lineage>
</organism>
<geneLocation type="chloroplast"/>
<protein>
    <recommendedName>
        <fullName evidence="1">Photosystem II reaction center protein Z</fullName>
        <shortName evidence="1">PSII-Z</shortName>
    </recommendedName>
</protein>
<sequence>MTIIFQLTLFALIAVSFLLVIGVPVVFASPSGWTENKGTVFSGVGIWFLLVFAVGILNSFVI</sequence>
<dbReference type="EMBL" id="DQ291132">
    <property type="protein sequence ID" value="ABB82007.1"/>
    <property type="molecule type" value="Genomic_DNA"/>
</dbReference>
<dbReference type="RefSeq" id="YP_635846.1">
    <property type="nucleotide sequence ID" value="NC_008099.1"/>
</dbReference>
<dbReference type="SMR" id="Q20EZ9"/>
<dbReference type="GeneID" id="4100185"/>
<dbReference type="GO" id="GO:0009535">
    <property type="term" value="C:chloroplast thylakoid membrane"/>
    <property type="evidence" value="ECO:0007669"/>
    <property type="project" value="UniProtKB-SubCell"/>
</dbReference>
<dbReference type="GO" id="GO:0009539">
    <property type="term" value="C:photosystem II reaction center"/>
    <property type="evidence" value="ECO:0007669"/>
    <property type="project" value="InterPro"/>
</dbReference>
<dbReference type="GO" id="GO:0015979">
    <property type="term" value="P:photosynthesis"/>
    <property type="evidence" value="ECO:0007669"/>
    <property type="project" value="UniProtKB-UniRule"/>
</dbReference>
<dbReference type="GO" id="GO:0042549">
    <property type="term" value="P:photosystem II stabilization"/>
    <property type="evidence" value="ECO:0007669"/>
    <property type="project" value="InterPro"/>
</dbReference>
<dbReference type="Gene3D" id="1.10.287.740">
    <property type="entry name" value="Photosystem II PsbZ, reaction centre"/>
    <property type="match status" value="1"/>
</dbReference>
<dbReference type="HAMAP" id="MF_00644">
    <property type="entry name" value="PSII_PsbZ"/>
    <property type="match status" value="1"/>
</dbReference>
<dbReference type="InterPro" id="IPR002644">
    <property type="entry name" value="PSII_PsbZ"/>
</dbReference>
<dbReference type="InterPro" id="IPR036512">
    <property type="entry name" value="PSII_PsbZ_sf"/>
</dbReference>
<dbReference type="NCBIfam" id="TIGR03043">
    <property type="entry name" value="PS_II_psbZ"/>
    <property type="match status" value="1"/>
</dbReference>
<dbReference type="PANTHER" id="PTHR34971">
    <property type="entry name" value="PHOTOSYSTEM II REACTION CENTER PROTEIN Z"/>
    <property type="match status" value="1"/>
</dbReference>
<dbReference type="PANTHER" id="PTHR34971:SF2">
    <property type="entry name" value="PHOTOSYSTEM II REACTION CENTER PROTEIN Z"/>
    <property type="match status" value="1"/>
</dbReference>
<dbReference type="Pfam" id="PF01737">
    <property type="entry name" value="Ycf9"/>
    <property type="match status" value="1"/>
</dbReference>
<dbReference type="SUPFAM" id="SSF161055">
    <property type="entry name" value="PsbZ-like"/>
    <property type="match status" value="1"/>
</dbReference>
<accession>Q20EZ9</accession>
<evidence type="ECO:0000255" key="1">
    <source>
        <dbReference type="HAMAP-Rule" id="MF_00644"/>
    </source>
</evidence>
<comment type="function">
    <text evidence="1">May control the interaction of photosystem II (PSII) cores with the light-harvesting antenna, regulates electron flow through the 2 photosystem reaction centers. PSII is a light-driven water plastoquinone oxidoreductase, using light energy to abstract electrons from H(2)O, generating a proton gradient subsequently used for ATP formation.</text>
</comment>
<comment type="subunit">
    <text evidence="1">PSII is composed of 1 copy each of membrane proteins PsbA, PsbB, PsbC, PsbD, PsbE, PsbF, PsbH, PsbI, PsbJ, PsbK, PsbL, PsbM, PsbT, PsbY, PsbZ, Psb30/Ycf12, at least 3 peripheral proteins of the oxygen-evolving complex and a large number of cofactors. It forms dimeric complexes.</text>
</comment>
<comment type="subcellular location">
    <subcellularLocation>
        <location evidence="1">Plastid</location>
        <location evidence="1">Chloroplast thylakoid membrane</location>
        <topology evidence="1">Multi-pass membrane protein</topology>
    </subcellularLocation>
</comment>
<comment type="similarity">
    <text evidence="1">Belongs to the PsbZ family.</text>
</comment>
<name>PSBZ_OLTVI</name>
<feature type="chain" id="PRO_0000277226" description="Photosystem II reaction center protein Z">
    <location>
        <begin position="1"/>
        <end position="62"/>
    </location>
</feature>
<feature type="transmembrane region" description="Helical" evidence="1">
    <location>
        <begin position="8"/>
        <end position="28"/>
    </location>
</feature>
<feature type="transmembrane region" description="Helical" evidence="1">
    <location>
        <begin position="41"/>
        <end position="61"/>
    </location>
</feature>
<keyword id="KW-0150">Chloroplast</keyword>
<keyword id="KW-0472">Membrane</keyword>
<keyword id="KW-0602">Photosynthesis</keyword>
<keyword id="KW-0604">Photosystem II</keyword>
<keyword id="KW-0934">Plastid</keyword>
<keyword id="KW-0674">Reaction center</keyword>
<keyword id="KW-0793">Thylakoid</keyword>
<keyword id="KW-0812">Transmembrane</keyword>
<keyword id="KW-1133">Transmembrane helix</keyword>
<proteinExistence type="inferred from homology"/>